<dbReference type="EMBL" id="FM180568">
    <property type="protein sequence ID" value="CAS10978.1"/>
    <property type="molecule type" value="Genomic_DNA"/>
</dbReference>
<dbReference type="RefSeq" id="WP_000246829.1">
    <property type="nucleotide sequence ID" value="NC_011601.1"/>
</dbReference>
<dbReference type="SMR" id="B7UJ44"/>
<dbReference type="KEGG" id="ecg:E2348C_3430"/>
<dbReference type="HOGENOM" id="CLU_115353_1_0_6"/>
<dbReference type="Proteomes" id="UP000008205">
    <property type="component" value="Chromosome"/>
</dbReference>
<dbReference type="GO" id="GO:0003676">
    <property type="term" value="F:nucleic acid binding"/>
    <property type="evidence" value="ECO:0007669"/>
    <property type="project" value="InterPro"/>
</dbReference>
<dbReference type="CDD" id="cd20736">
    <property type="entry name" value="PoNe_Nuclease"/>
    <property type="match status" value="1"/>
</dbReference>
<dbReference type="Gene3D" id="3.40.1350.10">
    <property type="match status" value="1"/>
</dbReference>
<dbReference type="HAMAP" id="MF_00048">
    <property type="entry name" value="UPF0102"/>
    <property type="match status" value="1"/>
</dbReference>
<dbReference type="InterPro" id="IPR011335">
    <property type="entry name" value="Restrct_endonuc-II-like"/>
</dbReference>
<dbReference type="InterPro" id="IPR011856">
    <property type="entry name" value="tRNA_endonuc-like_dom_sf"/>
</dbReference>
<dbReference type="InterPro" id="IPR003509">
    <property type="entry name" value="UPF0102_YraN-like"/>
</dbReference>
<dbReference type="NCBIfam" id="NF009150">
    <property type="entry name" value="PRK12497.1-3"/>
    <property type="match status" value="1"/>
</dbReference>
<dbReference type="NCBIfam" id="TIGR00252">
    <property type="entry name" value="YraN family protein"/>
    <property type="match status" value="1"/>
</dbReference>
<dbReference type="PANTHER" id="PTHR34039">
    <property type="entry name" value="UPF0102 PROTEIN YRAN"/>
    <property type="match status" value="1"/>
</dbReference>
<dbReference type="PANTHER" id="PTHR34039:SF1">
    <property type="entry name" value="UPF0102 PROTEIN YRAN"/>
    <property type="match status" value="1"/>
</dbReference>
<dbReference type="Pfam" id="PF02021">
    <property type="entry name" value="UPF0102"/>
    <property type="match status" value="1"/>
</dbReference>
<dbReference type="SUPFAM" id="SSF52980">
    <property type="entry name" value="Restriction endonuclease-like"/>
    <property type="match status" value="1"/>
</dbReference>
<sequence length="131" mass="14812">MATVPTRSGSPRQLTTKQTGDAWEAQARRWLEGKGLRFIAANVNERGGEIDLIMREGRTTIFIEVRYRRSALYGGAAASVTRSKQHKLLQTARLWLARHNGSFDTVDCRFDVVAFTGNEVEWIKDAFNDHS</sequence>
<evidence type="ECO:0000255" key="1">
    <source>
        <dbReference type="HAMAP-Rule" id="MF_00048"/>
    </source>
</evidence>
<evidence type="ECO:0000256" key="2">
    <source>
        <dbReference type="SAM" id="MobiDB-lite"/>
    </source>
</evidence>
<organism>
    <name type="scientific">Escherichia coli O127:H6 (strain E2348/69 / EPEC)</name>
    <dbReference type="NCBI Taxonomy" id="574521"/>
    <lineage>
        <taxon>Bacteria</taxon>
        <taxon>Pseudomonadati</taxon>
        <taxon>Pseudomonadota</taxon>
        <taxon>Gammaproteobacteria</taxon>
        <taxon>Enterobacterales</taxon>
        <taxon>Enterobacteriaceae</taxon>
        <taxon>Escherichia</taxon>
    </lineage>
</organism>
<gene>
    <name evidence="1" type="primary">yraN</name>
    <name type="ordered locus">E2348C_3430</name>
</gene>
<comment type="similarity">
    <text evidence="1">Belongs to the UPF0102 family.</text>
</comment>
<accession>B7UJ44</accession>
<feature type="chain" id="PRO_1000200140" description="UPF0102 protein YraN">
    <location>
        <begin position="1"/>
        <end position="131"/>
    </location>
</feature>
<feature type="region of interest" description="Disordered" evidence="2">
    <location>
        <begin position="1"/>
        <end position="21"/>
    </location>
</feature>
<feature type="compositionally biased region" description="Polar residues" evidence="2">
    <location>
        <begin position="1"/>
        <end position="19"/>
    </location>
</feature>
<proteinExistence type="inferred from homology"/>
<reference key="1">
    <citation type="journal article" date="2009" name="J. Bacteriol.">
        <title>Complete genome sequence and comparative genome analysis of enteropathogenic Escherichia coli O127:H6 strain E2348/69.</title>
        <authorList>
            <person name="Iguchi A."/>
            <person name="Thomson N.R."/>
            <person name="Ogura Y."/>
            <person name="Saunders D."/>
            <person name="Ooka T."/>
            <person name="Henderson I.R."/>
            <person name="Harris D."/>
            <person name="Asadulghani M."/>
            <person name="Kurokawa K."/>
            <person name="Dean P."/>
            <person name="Kenny B."/>
            <person name="Quail M.A."/>
            <person name="Thurston S."/>
            <person name="Dougan G."/>
            <person name="Hayashi T."/>
            <person name="Parkhill J."/>
            <person name="Frankel G."/>
        </authorList>
    </citation>
    <scope>NUCLEOTIDE SEQUENCE [LARGE SCALE GENOMIC DNA]</scope>
    <source>
        <strain>E2348/69 / EPEC</strain>
    </source>
</reference>
<protein>
    <recommendedName>
        <fullName evidence="1">UPF0102 protein YraN</fullName>
    </recommendedName>
</protein>
<keyword id="KW-1185">Reference proteome</keyword>
<name>YRAN_ECO27</name>